<gene>
    <name evidence="1" type="primary">rpmB</name>
    <name evidence="1" type="synonym">rpl28</name>
    <name type="ordered locus">Tery_4126</name>
</gene>
<protein>
    <recommendedName>
        <fullName evidence="1">Large ribosomal subunit protein bL28</fullName>
    </recommendedName>
    <alternativeName>
        <fullName evidence="2">50S ribosomal protein L28</fullName>
    </alternativeName>
</protein>
<dbReference type="EMBL" id="CP000393">
    <property type="protein sequence ID" value="ABG53134.1"/>
    <property type="molecule type" value="Genomic_DNA"/>
</dbReference>
<dbReference type="RefSeq" id="WP_011613464.1">
    <property type="nucleotide sequence ID" value="NC_008312.1"/>
</dbReference>
<dbReference type="SMR" id="Q10X90"/>
<dbReference type="STRING" id="203124.Tery_4126"/>
<dbReference type="KEGG" id="ter:Tery_4126"/>
<dbReference type="eggNOG" id="COG0227">
    <property type="taxonomic scope" value="Bacteria"/>
</dbReference>
<dbReference type="HOGENOM" id="CLU_064548_3_0_3"/>
<dbReference type="OrthoDB" id="9805609at2"/>
<dbReference type="GO" id="GO:1990904">
    <property type="term" value="C:ribonucleoprotein complex"/>
    <property type="evidence" value="ECO:0007669"/>
    <property type="project" value="UniProtKB-KW"/>
</dbReference>
<dbReference type="GO" id="GO:0005840">
    <property type="term" value="C:ribosome"/>
    <property type="evidence" value="ECO:0007669"/>
    <property type="project" value="UniProtKB-KW"/>
</dbReference>
<dbReference type="GO" id="GO:0003735">
    <property type="term" value="F:structural constituent of ribosome"/>
    <property type="evidence" value="ECO:0007669"/>
    <property type="project" value="InterPro"/>
</dbReference>
<dbReference type="GO" id="GO:0006412">
    <property type="term" value="P:translation"/>
    <property type="evidence" value="ECO:0007669"/>
    <property type="project" value="UniProtKB-UniRule"/>
</dbReference>
<dbReference type="Gene3D" id="2.30.170.40">
    <property type="entry name" value="Ribosomal protein L28/L24"/>
    <property type="match status" value="1"/>
</dbReference>
<dbReference type="HAMAP" id="MF_00373">
    <property type="entry name" value="Ribosomal_bL28"/>
    <property type="match status" value="1"/>
</dbReference>
<dbReference type="InterPro" id="IPR026569">
    <property type="entry name" value="Ribosomal_bL28"/>
</dbReference>
<dbReference type="InterPro" id="IPR034704">
    <property type="entry name" value="Ribosomal_bL28/bL31-like_sf"/>
</dbReference>
<dbReference type="InterPro" id="IPR001383">
    <property type="entry name" value="Ribosomal_bL28_bact-type"/>
</dbReference>
<dbReference type="InterPro" id="IPR037147">
    <property type="entry name" value="Ribosomal_bL28_sf"/>
</dbReference>
<dbReference type="NCBIfam" id="TIGR00009">
    <property type="entry name" value="L28"/>
    <property type="match status" value="1"/>
</dbReference>
<dbReference type="PANTHER" id="PTHR13528">
    <property type="entry name" value="39S RIBOSOMAL PROTEIN L28, MITOCHONDRIAL"/>
    <property type="match status" value="1"/>
</dbReference>
<dbReference type="PANTHER" id="PTHR13528:SF2">
    <property type="entry name" value="LARGE RIBOSOMAL SUBUNIT PROTEIN BL28M"/>
    <property type="match status" value="1"/>
</dbReference>
<dbReference type="Pfam" id="PF00830">
    <property type="entry name" value="Ribosomal_L28"/>
    <property type="match status" value="1"/>
</dbReference>
<dbReference type="SUPFAM" id="SSF143800">
    <property type="entry name" value="L28p-like"/>
    <property type="match status" value="1"/>
</dbReference>
<accession>Q10X90</accession>
<evidence type="ECO:0000255" key="1">
    <source>
        <dbReference type="HAMAP-Rule" id="MF_00373"/>
    </source>
</evidence>
<evidence type="ECO:0000305" key="2"/>
<feature type="chain" id="PRO_1000007397" description="Large ribosomal subunit protein bL28">
    <location>
        <begin position="1"/>
        <end position="78"/>
    </location>
</feature>
<organism>
    <name type="scientific">Trichodesmium erythraeum (strain IMS101)</name>
    <dbReference type="NCBI Taxonomy" id="203124"/>
    <lineage>
        <taxon>Bacteria</taxon>
        <taxon>Bacillati</taxon>
        <taxon>Cyanobacteriota</taxon>
        <taxon>Cyanophyceae</taxon>
        <taxon>Oscillatoriophycideae</taxon>
        <taxon>Oscillatoriales</taxon>
        <taxon>Microcoleaceae</taxon>
        <taxon>Trichodesmium</taxon>
    </lineage>
</organism>
<comment type="similarity">
    <text evidence="1">Belongs to the bacterial ribosomal protein bL28 family.</text>
</comment>
<reference key="1">
    <citation type="journal article" date="2015" name="Proc. Natl. Acad. Sci. U.S.A.">
        <title>Trichodesmium genome maintains abundant, widespread noncoding DNA in situ, despite oligotrophic lifestyle.</title>
        <authorList>
            <person name="Walworth N."/>
            <person name="Pfreundt U."/>
            <person name="Nelson W.C."/>
            <person name="Mincer T."/>
            <person name="Heidelberg J.F."/>
            <person name="Fu F."/>
            <person name="Waterbury J.B."/>
            <person name="Glavina del Rio T."/>
            <person name="Goodwin L."/>
            <person name="Kyrpides N.C."/>
            <person name="Land M.L."/>
            <person name="Woyke T."/>
            <person name="Hutchins D.A."/>
            <person name="Hess W.R."/>
            <person name="Webb E.A."/>
        </authorList>
    </citation>
    <scope>NUCLEOTIDE SEQUENCE [LARGE SCALE GENOMIC DNA]</scope>
    <source>
        <strain>IMS101</strain>
    </source>
</reference>
<sequence>MSRKCQLTGKKANNGYSVSHSHIRTHKLQHANLQWKKVWWPQGKKWVKLKLSTKAIKTLQSKGIQAMAKQAGIDLNKF</sequence>
<proteinExistence type="inferred from homology"/>
<name>RL28_TRIEI</name>
<keyword id="KW-0687">Ribonucleoprotein</keyword>
<keyword id="KW-0689">Ribosomal protein</keyword>